<accession>A6QAX8</accession>
<reference key="1">
    <citation type="journal article" date="2007" name="Proc. Natl. Acad. Sci. U.S.A.">
        <title>Deep-sea vent epsilon-proteobacterial genomes provide insights into emergence of pathogens.</title>
        <authorList>
            <person name="Nakagawa S."/>
            <person name="Takaki Y."/>
            <person name="Shimamura S."/>
            <person name="Reysenbach A.-L."/>
            <person name="Takai K."/>
            <person name="Horikoshi K."/>
        </authorList>
    </citation>
    <scope>NUCLEOTIDE SEQUENCE [LARGE SCALE GENOMIC DNA]</scope>
    <source>
        <strain>NBC37-1</strain>
    </source>
</reference>
<keyword id="KW-0963">Cytoplasm</keyword>
<keyword id="KW-0664">Pyridoxine biosynthesis</keyword>
<keyword id="KW-0808">Transferase</keyword>
<feature type="chain" id="PRO_1000022404" description="Pyridoxine 5'-phosphate synthase">
    <location>
        <begin position="1"/>
        <end position="258"/>
    </location>
</feature>
<feature type="active site" description="Proton acceptor" evidence="1">
    <location>
        <position position="42"/>
    </location>
</feature>
<feature type="active site" description="Proton acceptor" evidence="1">
    <location>
        <position position="69"/>
    </location>
</feature>
<feature type="active site" description="Proton donor" evidence="1">
    <location>
        <position position="213"/>
    </location>
</feature>
<feature type="binding site" evidence="1">
    <location>
        <position position="6"/>
    </location>
    <ligand>
        <name>3-amino-2-oxopropyl phosphate</name>
        <dbReference type="ChEBI" id="CHEBI:57279"/>
    </ligand>
</feature>
<feature type="binding site" evidence="1">
    <location>
        <begin position="8"/>
        <end position="9"/>
    </location>
    <ligand>
        <name>1-deoxy-D-xylulose 5-phosphate</name>
        <dbReference type="ChEBI" id="CHEBI:57792"/>
    </ligand>
</feature>
<feature type="binding site" evidence="1">
    <location>
        <position position="17"/>
    </location>
    <ligand>
        <name>3-amino-2-oxopropyl phosphate</name>
        <dbReference type="ChEBI" id="CHEBI:57279"/>
    </ligand>
</feature>
<feature type="binding site" evidence="1">
    <location>
        <position position="44"/>
    </location>
    <ligand>
        <name>1-deoxy-D-xylulose 5-phosphate</name>
        <dbReference type="ChEBI" id="CHEBI:57792"/>
    </ligand>
</feature>
<feature type="binding site" evidence="1">
    <location>
        <position position="49"/>
    </location>
    <ligand>
        <name>1-deoxy-D-xylulose 5-phosphate</name>
        <dbReference type="ChEBI" id="CHEBI:57792"/>
    </ligand>
</feature>
<feature type="binding site" evidence="1">
    <location>
        <position position="99"/>
    </location>
    <ligand>
        <name>1-deoxy-D-xylulose 5-phosphate</name>
        <dbReference type="ChEBI" id="CHEBI:57792"/>
    </ligand>
</feature>
<feature type="binding site" evidence="1">
    <location>
        <position position="214"/>
    </location>
    <ligand>
        <name>3-amino-2-oxopropyl phosphate</name>
        <dbReference type="ChEBI" id="CHEBI:57279"/>
    </ligand>
</feature>
<feature type="binding site" evidence="1">
    <location>
        <begin position="235"/>
        <end position="236"/>
    </location>
    <ligand>
        <name>3-amino-2-oxopropyl phosphate</name>
        <dbReference type="ChEBI" id="CHEBI:57279"/>
    </ligand>
</feature>
<feature type="site" description="Transition state stabilizer" evidence="1">
    <location>
        <position position="150"/>
    </location>
</feature>
<organism>
    <name type="scientific">Sulfurovum sp. (strain NBC37-1)</name>
    <dbReference type="NCBI Taxonomy" id="387093"/>
    <lineage>
        <taxon>Bacteria</taxon>
        <taxon>Pseudomonadati</taxon>
        <taxon>Campylobacterota</taxon>
        <taxon>Epsilonproteobacteria</taxon>
        <taxon>Campylobacterales</taxon>
        <taxon>Sulfurovaceae</taxon>
        <taxon>Sulfurovum</taxon>
    </lineage>
</organism>
<evidence type="ECO:0000255" key="1">
    <source>
        <dbReference type="HAMAP-Rule" id="MF_00279"/>
    </source>
</evidence>
<sequence length="258" mass="28734">MLLGVNIDHIAVLREARKVADPDPLDALGICKRARADQITIHLREDRRHMHDMDAKNIIELSALPVNLECATEPSMIDIACRLRPHRVTLVPEKREEVTTEGGLAVTGEQTRLQEAIKRLQEKEIEVSLFIDPASDAVKASSDLGVEWIEFHTGKYANIYAMLYSNLSKTHHSIPELKLPRSVLKKMLEEELESLSALSAEARVLGLKVAAGHGLNYHNVQAVAQIEEIEELNIGQSIIARSVYTGLEQAILDMKSLL</sequence>
<name>PDXJ_SULNB</name>
<gene>
    <name evidence="1" type="primary">pdxJ</name>
    <name type="ordered locus">SUN_1687</name>
</gene>
<dbReference type="EC" id="2.6.99.2" evidence="1"/>
<dbReference type="EMBL" id="AP009179">
    <property type="protein sequence ID" value="BAF72637.1"/>
    <property type="molecule type" value="Genomic_DNA"/>
</dbReference>
<dbReference type="RefSeq" id="WP_012083447.1">
    <property type="nucleotide sequence ID" value="NC_009663.1"/>
</dbReference>
<dbReference type="SMR" id="A6QAX8"/>
<dbReference type="STRING" id="387093.SUN_1687"/>
<dbReference type="KEGG" id="sun:SUN_1687"/>
<dbReference type="eggNOG" id="COG0854">
    <property type="taxonomic scope" value="Bacteria"/>
</dbReference>
<dbReference type="HOGENOM" id="CLU_074563_0_0_7"/>
<dbReference type="OrthoDB" id="9806590at2"/>
<dbReference type="UniPathway" id="UPA00244">
    <property type="reaction ID" value="UER00313"/>
</dbReference>
<dbReference type="Proteomes" id="UP000006378">
    <property type="component" value="Chromosome"/>
</dbReference>
<dbReference type="GO" id="GO:0005829">
    <property type="term" value="C:cytosol"/>
    <property type="evidence" value="ECO:0007669"/>
    <property type="project" value="TreeGrafter"/>
</dbReference>
<dbReference type="GO" id="GO:0033856">
    <property type="term" value="F:pyridoxine 5'-phosphate synthase activity"/>
    <property type="evidence" value="ECO:0007669"/>
    <property type="project" value="UniProtKB-EC"/>
</dbReference>
<dbReference type="GO" id="GO:0008615">
    <property type="term" value="P:pyridoxine biosynthetic process"/>
    <property type="evidence" value="ECO:0007669"/>
    <property type="project" value="UniProtKB-UniRule"/>
</dbReference>
<dbReference type="CDD" id="cd00003">
    <property type="entry name" value="PNPsynthase"/>
    <property type="match status" value="1"/>
</dbReference>
<dbReference type="Gene3D" id="3.20.20.70">
    <property type="entry name" value="Aldolase class I"/>
    <property type="match status" value="1"/>
</dbReference>
<dbReference type="HAMAP" id="MF_00279">
    <property type="entry name" value="PdxJ"/>
    <property type="match status" value="1"/>
</dbReference>
<dbReference type="InterPro" id="IPR013785">
    <property type="entry name" value="Aldolase_TIM"/>
</dbReference>
<dbReference type="InterPro" id="IPR004569">
    <property type="entry name" value="PyrdxlP_synth_PdxJ"/>
</dbReference>
<dbReference type="InterPro" id="IPR036130">
    <property type="entry name" value="Pyridoxine-5'_phos_synth"/>
</dbReference>
<dbReference type="NCBIfam" id="TIGR00559">
    <property type="entry name" value="pdxJ"/>
    <property type="match status" value="1"/>
</dbReference>
<dbReference type="NCBIfam" id="NF003625">
    <property type="entry name" value="PRK05265.1-3"/>
    <property type="match status" value="1"/>
</dbReference>
<dbReference type="NCBIfam" id="NF003627">
    <property type="entry name" value="PRK05265.1-5"/>
    <property type="match status" value="1"/>
</dbReference>
<dbReference type="PANTHER" id="PTHR30456">
    <property type="entry name" value="PYRIDOXINE 5'-PHOSPHATE SYNTHASE"/>
    <property type="match status" value="1"/>
</dbReference>
<dbReference type="PANTHER" id="PTHR30456:SF0">
    <property type="entry name" value="PYRIDOXINE 5'-PHOSPHATE SYNTHASE"/>
    <property type="match status" value="1"/>
</dbReference>
<dbReference type="Pfam" id="PF03740">
    <property type="entry name" value="PdxJ"/>
    <property type="match status" value="1"/>
</dbReference>
<dbReference type="SUPFAM" id="SSF63892">
    <property type="entry name" value="Pyridoxine 5'-phosphate synthase"/>
    <property type="match status" value="1"/>
</dbReference>
<proteinExistence type="inferred from homology"/>
<protein>
    <recommendedName>
        <fullName evidence="1">Pyridoxine 5'-phosphate synthase</fullName>
        <shortName evidence="1">PNP synthase</shortName>
        <ecNumber evidence="1">2.6.99.2</ecNumber>
    </recommendedName>
</protein>
<comment type="function">
    <text evidence="1">Catalyzes the complicated ring closure reaction between the two acyclic compounds 1-deoxy-D-xylulose-5-phosphate (DXP) and 3-amino-2-oxopropyl phosphate (1-amino-acetone-3-phosphate or AAP) to form pyridoxine 5'-phosphate (PNP) and inorganic phosphate.</text>
</comment>
<comment type="catalytic activity">
    <reaction evidence="1">
        <text>3-amino-2-oxopropyl phosphate + 1-deoxy-D-xylulose 5-phosphate = pyridoxine 5'-phosphate + phosphate + 2 H2O + H(+)</text>
        <dbReference type="Rhea" id="RHEA:15265"/>
        <dbReference type="ChEBI" id="CHEBI:15377"/>
        <dbReference type="ChEBI" id="CHEBI:15378"/>
        <dbReference type="ChEBI" id="CHEBI:43474"/>
        <dbReference type="ChEBI" id="CHEBI:57279"/>
        <dbReference type="ChEBI" id="CHEBI:57792"/>
        <dbReference type="ChEBI" id="CHEBI:58589"/>
        <dbReference type="EC" id="2.6.99.2"/>
    </reaction>
</comment>
<comment type="pathway">
    <text evidence="1">Cofactor biosynthesis; pyridoxine 5'-phosphate biosynthesis; pyridoxine 5'-phosphate from D-erythrose 4-phosphate: step 5/5.</text>
</comment>
<comment type="subunit">
    <text evidence="1">Homooctamer; tetramer of dimers.</text>
</comment>
<comment type="subcellular location">
    <subcellularLocation>
        <location evidence="1">Cytoplasm</location>
    </subcellularLocation>
</comment>
<comment type="similarity">
    <text evidence="1">Belongs to the PNP synthase family.</text>
</comment>